<reference key="1">
    <citation type="journal article" date="2002" name="J. Bacteriol.">
        <title>Whole-genome comparison of Mycobacterium tuberculosis clinical and laboratory strains.</title>
        <authorList>
            <person name="Fleischmann R.D."/>
            <person name="Alland D."/>
            <person name="Eisen J.A."/>
            <person name="Carpenter L."/>
            <person name="White O."/>
            <person name="Peterson J.D."/>
            <person name="DeBoy R.T."/>
            <person name="Dodson R.J."/>
            <person name="Gwinn M.L."/>
            <person name="Haft D.H."/>
            <person name="Hickey E.K."/>
            <person name="Kolonay J.F."/>
            <person name="Nelson W.C."/>
            <person name="Umayam L.A."/>
            <person name="Ermolaeva M.D."/>
            <person name="Salzberg S.L."/>
            <person name="Delcher A."/>
            <person name="Utterback T.R."/>
            <person name="Weidman J.F."/>
            <person name="Khouri H.M."/>
            <person name="Gill J."/>
            <person name="Mikula A."/>
            <person name="Bishai W."/>
            <person name="Jacobs W.R. Jr."/>
            <person name="Venter J.C."/>
            <person name="Fraser C.M."/>
        </authorList>
    </citation>
    <scope>NUCLEOTIDE SEQUENCE [LARGE SCALE GENOMIC DNA]</scope>
    <source>
        <strain>CDC 1551 / Oshkosh</strain>
    </source>
</reference>
<protein>
    <recommendedName>
        <fullName evidence="1">Large ribosomal subunit protein uL16</fullName>
    </recommendedName>
    <alternativeName>
        <fullName evidence="3">50S ribosomal protein L16</fullName>
    </alternativeName>
</protein>
<gene>
    <name evidence="1" type="primary">rplP</name>
    <name type="ordered locus">MT0735</name>
</gene>
<evidence type="ECO:0000255" key="1">
    <source>
        <dbReference type="HAMAP-Rule" id="MF_01342"/>
    </source>
</evidence>
<evidence type="ECO:0000256" key="2">
    <source>
        <dbReference type="SAM" id="MobiDB-lite"/>
    </source>
</evidence>
<evidence type="ECO:0000305" key="3"/>
<feature type="chain" id="PRO_0000428206" description="Large ribosomal subunit protein uL16">
    <location>
        <begin position="1"/>
        <end position="138"/>
    </location>
</feature>
<feature type="region of interest" description="Disordered" evidence="2">
    <location>
        <begin position="1"/>
        <end position="22"/>
    </location>
</feature>
<feature type="compositionally biased region" description="Basic residues" evidence="2">
    <location>
        <begin position="1"/>
        <end position="17"/>
    </location>
</feature>
<organism>
    <name type="scientific">Mycobacterium tuberculosis (strain CDC 1551 / Oshkosh)</name>
    <dbReference type="NCBI Taxonomy" id="83331"/>
    <lineage>
        <taxon>Bacteria</taxon>
        <taxon>Bacillati</taxon>
        <taxon>Actinomycetota</taxon>
        <taxon>Actinomycetes</taxon>
        <taxon>Mycobacteriales</taxon>
        <taxon>Mycobacteriaceae</taxon>
        <taxon>Mycobacterium</taxon>
        <taxon>Mycobacterium tuberculosis complex</taxon>
    </lineage>
</organism>
<dbReference type="EMBL" id="AE000516">
    <property type="protein sequence ID" value="AAK44966.1"/>
    <property type="molecule type" value="Genomic_DNA"/>
</dbReference>
<dbReference type="PIR" id="G70642">
    <property type="entry name" value="G70642"/>
</dbReference>
<dbReference type="RefSeq" id="WP_003403592.1">
    <property type="nucleotide sequence ID" value="NZ_KK341227.1"/>
</dbReference>
<dbReference type="SMR" id="P9WHD4"/>
<dbReference type="KEGG" id="mtc:MT0735"/>
<dbReference type="PATRIC" id="fig|83331.31.peg.785"/>
<dbReference type="HOGENOM" id="CLU_078858_2_1_11"/>
<dbReference type="Proteomes" id="UP000001020">
    <property type="component" value="Chromosome"/>
</dbReference>
<dbReference type="GO" id="GO:0022625">
    <property type="term" value="C:cytosolic large ribosomal subunit"/>
    <property type="evidence" value="ECO:0007669"/>
    <property type="project" value="TreeGrafter"/>
</dbReference>
<dbReference type="GO" id="GO:0019843">
    <property type="term" value="F:rRNA binding"/>
    <property type="evidence" value="ECO:0007669"/>
    <property type="project" value="UniProtKB-UniRule"/>
</dbReference>
<dbReference type="GO" id="GO:0003735">
    <property type="term" value="F:structural constituent of ribosome"/>
    <property type="evidence" value="ECO:0007669"/>
    <property type="project" value="InterPro"/>
</dbReference>
<dbReference type="GO" id="GO:0000049">
    <property type="term" value="F:tRNA binding"/>
    <property type="evidence" value="ECO:0007669"/>
    <property type="project" value="UniProtKB-KW"/>
</dbReference>
<dbReference type="GO" id="GO:0006412">
    <property type="term" value="P:translation"/>
    <property type="evidence" value="ECO:0007669"/>
    <property type="project" value="UniProtKB-UniRule"/>
</dbReference>
<dbReference type="CDD" id="cd01433">
    <property type="entry name" value="Ribosomal_L16_L10e"/>
    <property type="match status" value="1"/>
</dbReference>
<dbReference type="FunFam" id="3.90.1170.10:FF:000001">
    <property type="entry name" value="50S ribosomal protein L16"/>
    <property type="match status" value="1"/>
</dbReference>
<dbReference type="Gene3D" id="3.90.1170.10">
    <property type="entry name" value="Ribosomal protein L10e/L16"/>
    <property type="match status" value="1"/>
</dbReference>
<dbReference type="HAMAP" id="MF_01342">
    <property type="entry name" value="Ribosomal_uL16"/>
    <property type="match status" value="1"/>
</dbReference>
<dbReference type="InterPro" id="IPR047873">
    <property type="entry name" value="Ribosomal_uL16"/>
</dbReference>
<dbReference type="InterPro" id="IPR000114">
    <property type="entry name" value="Ribosomal_uL16_bact-type"/>
</dbReference>
<dbReference type="InterPro" id="IPR020798">
    <property type="entry name" value="Ribosomal_uL16_CS"/>
</dbReference>
<dbReference type="InterPro" id="IPR016180">
    <property type="entry name" value="Ribosomal_uL16_dom"/>
</dbReference>
<dbReference type="InterPro" id="IPR036920">
    <property type="entry name" value="Ribosomal_uL16_sf"/>
</dbReference>
<dbReference type="NCBIfam" id="TIGR01164">
    <property type="entry name" value="rplP_bact"/>
    <property type="match status" value="1"/>
</dbReference>
<dbReference type="PANTHER" id="PTHR12220">
    <property type="entry name" value="50S/60S RIBOSOMAL PROTEIN L16"/>
    <property type="match status" value="1"/>
</dbReference>
<dbReference type="PANTHER" id="PTHR12220:SF13">
    <property type="entry name" value="LARGE RIBOSOMAL SUBUNIT PROTEIN UL16M"/>
    <property type="match status" value="1"/>
</dbReference>
<dbReference type="Pfam" id="PF00252">
    <property type="entry name" value="Ribosomal_L16"/>
    <property type="match status" value="1"/>
</dbReference>
<dbReference type="PRINTS" id="PR00060">
    <property type="entry name" value="RIBOSOMALL16"/>
</dbReference>
<dbReference type="SUPFAM" id="SSF54686">
    <property type="entry name" value="Ribosomal protein L16p/L10e"/>
    <property type="match status" value="1"/>
</dbReference>
<dbReference type="PROSITE" id="PS00586">
    <property type="entry name" value="RIBOSOMAL_L16_1"/>
    <property type="match status" value="1"/>
</dbReference>
<dbReference type="PROSITE" id="PS00701">
    <property type="entry name" value="RIBOSOMAL_L16_2"/>
    <property type="match status" value="1"/>
</dbReference>
<comment type="function">
    <text evidence="1">Binds 23S rRNA and is also seen to make contacts with the A and possibly P site tRNAs.</text>
</comment>
<comment type="subunit">
    <text evidence="1">Part of the 50S ribosomal subunit.</text>
</comment>
<comment type="similarity">
    <text evidence="1">Belongs to the universal ribosomal protein uL16 family.</text>
</comment>
<accession>P9WHD4</accession>
<accession>L0T7H3</accession>
<accession>P95056</accession>
<sequence length="138" mass="15692">MLIPRKVKHRKQHHPRQRGIASGGTTVNFGDYGIQALEHAYVTNRQIESARIAINRHIKRGGKVWINIFPDRPLTKKPAETRMGSGKGSPEWWVANVKPGRVLFELSYPNEGVARAALTRAIHKLPIKARIITREEQF</sequence>
<keyword id="KW-1185">Reference proteome</keyword>
<keyword id="KW-0687">Ribonucleoprotein</keyword>
<keyword id="KW-0689">Ribosomal protein</keyword>
<keyword id="KW-0694">RNA-binding</keyword>
<keyword id="KW-0699">rRNA-binding</keyword>
<keyword id="KW-0820">tRNA-binding</keyword>
<proteinExistence type="inferred from homology"/>
<name>RL16_MYCTO</name>